<comment type="similarity">
    <text evidence="1">Belongs to the bacterial ribosomal protein bL34 family.</text>
</comment>
<reference key="1">
    <citation type="journal article" date="2007" name="PLoS ONE">
        <title>Analysis of the neurotoxin complex genes in Clostridium botulinum A1-A4 and B1 strains: BoNT/A3, /Ba4 and /B1 clusters are located within plasmids.</title>
        <authorList>
            <person name="Smith T.J."/>
            <person name="Hill K.K."/>
            <person name="Foley B.T."/>
            <person name="Detter J.C."/>
            <person name="Munk A.C."/>
            <person name="Bruce D.C."/>
            <person name="Doggett N.A."/>
            <person name="Smith L.A."/>
            <person name="Marks J.D."/>
            <person name="Xie G."/>
            <person name="Brettin T.S."/>
        </authorList>
    </citation>
    <scope>NUCLEOTIDE SEQUENCE [LARGE SCALE GENOMIC DNA]</scope>
    <source>
        <strain>Okra / Type B1</strain>
    </source>
</reference>
<proteinExistence type="inferred from homology"/>
<sequence>MFMTYQPKKRQRKKEHGFRKRMKTSSGRNILRKRRQKGRKRLTA</sequence>
<protein>
    <recommendedName>
        <fullName evidence="1">Large ribosomal subunit protein bL34</fullName>
    </recommendedName>
    <alternativeName>
        <fullName evidence="3">50S ribosomal protein L34</fullName>
    </alternativeName>
</protein>
<dbReference type="EMBL" id="CP000939">
    <property type="protein sequence ID" value="ACA44542.1"/>
    <property type="molecule type" value="Genomic_DNA"/>
</dbReference>
<dbReference type="RefSeq" id="WP_003359452.1">
    <property type="nucleotide sequence ID" value="NC_010516.1"/>
</dbReference>
<dbReference type="SMR" id="B1IHS4"/>
<dbReference type="GeneID" id="92940449"/>
<dbReference type="KEGG" id="cbb:CLD_0826"/>
<dbReference type="HOGENOM" id="CLU_129938_2_0_9"/>
<dbReference type="Proteomes" id="UP000008541">
    <property type="component" value="Chromosome"/>
</dbReference>
<dbReference type="GO" id="GO:1990904">
    <property type="term" value="C:ribonucleoprotein complex"/>
    <property type="evidence" value="ECO:0007669"/>
    <property type="project" value="UniProtKB-KW"/>
</dbReference>
<dbReference type="GO" id="GO:0005840">
    <property type="term" value="C:ribosome"/>
    <property type="evidence" value="ECO:0007669"/>
    <property type="project" value="UniProtKB-KW"/>
</dbReference>
<dbReference type="GO" id="GO:0003735">
    <property type="term" value="F:structural constituent of ribosome"/>
    <property type="evidence" value="ECO:0007669"/>
    <property type="project" value="InterPro"/>
</dbReference>
<dbReference type="GO" id="GO:0006412">
    <property type="term" value="P:translation"/>
    <property type="evidence" value="ECO:0007669"/>
    <property type="project" value="UniProtKB-UniRule"/>
</dbReference>
<dbReference type="FunFam" id="1.10.287.3980:FF:000001">
    <property type="entry name" value="Mitochondrial ribosomal protein L34"/>
    <property type="match status" value="1"/>
</dbReference>
<dbReference type="Gene3D" id="1.10.287.3980">
    <property type="match status" value="1"/>
</dbReference>
<dbReference type="HAMAP" id="MF_00391">
    <property type="entry name" value="Ribosomal_bL34"/>
    <property type="match status" value="1"/>
</dbReference>
<dbReference type="InterPro" id="IPR000271">
    <property type="entry name" value="Ribosomal_bL34"/>
</dbReference>
<dbReference type="InterPro" id="IPR020939">
    <property type="entry name" value="Ribosomal_bL34_CS"/>
</dbReference>
<dbReference type="NCBIfam" id="TIGR01030">
    <property type="entry name" value="rpmH_bact"/>
    <property type="match status" value="1"/>
</dbReference>
<dbReference type="PANTHER" id="PTHR14503:SF4">
    <property type="entry name" value="LARGE RIBOSOMAL SUBUNIT PROTEIN BL34M"/>
    <property type="match status" value="1"/>
</dbReference>
<dbReference type="PANTHER" id="PTHR14503">
    <property type="entry name" value="MITOCHONDRIAL RIBOSOMAL PROTEIN 34 FAMILY MEMBER"/>
    <property type="match status" value="1"/>
</dbReference>
<dbReference type="Pfam" id="PF00468">
    <property type="entry name" value="Ribosomal_L34"/>
    <property type="match status" value="1"/>
</dbReference>
<dbReference type="PROSITE" id="PS00784">
    <property type="entry name" value="RIBOSOMAL_L34"/>
    <property type="match status" value="1"/>
</dbReference>
<gene>
    <name evidence="1" type="primary">rpmH</name>
    <name type="ordered locus">CLD_0826</name>
</gene>
<organism>
    <name type="scientific">Clostridium botulinum (strain Okra / Type B1)</name>
    <dbReference type="NCBI Taxonomy" id="498213"/>
    <lineage>
        <taxon>Bacteria</taxon>
        <taxon>Bacillati</taxon>
        <taxon>Bacillota</taxon>
        <taxon>Clostridia</taxon>
        <taxon>Eubacteriales</taxon>
        <taxon>Clostridiaceae</taxon>
        <taxon>Clostridium</taxon>
    </lineage>
</organism>
<name>RL34_CLOBK</name>
<evidence type="ECO:0000255" key="1">
    <source>
        <dbReference type="HAMAP-Rule" id="MF_00391"/>
    </source>
</evidence>
<evidence type="ECO:0000256" key="2">
    <source>
        <dbReference type="SAM" id="MobiDB-lite"/>
    </source>
</evidence>
<evidence type="ECO:0000305" key="3"/>
<keyword id="KW-0687">Ribonucleoprotein</keyword>
<keyword id="KW-0689">Ribosomal protein</keyword>
<feature type="chain" id="PRO_1000196027" description="Large ribosomal subunit protein bL34">
    <location>
        <begin position="1"/>
        <end position="44"/>
    </location>
</feature>
<feature type="region of interest" description="Disordered" evidence="2">
    <location>
        <begin position="1"/>
        <end position="44"/>
    </location>
</feature>
<feature type="compositionally biased region" description="Basic residues" evidence="2">
    <location>
        <begin position="7"/>
        <end position="23"/>
    </location>
</feature>
<feature type="compositionally biased region" description="Basic residues" evidence="2">
    <location>
        <begin position="30"/>
        <end position="44"/>
    </location>
</feature>
<accession>B1IHS4</accession>